<comment type="function">
    <text evidence="1">Catalytic subunit of the SLX1-SLX4 structure-specific endonuclease that resolves DNA secondary structures generated during DNA repair and recombination. Has endonuclease activity towards branched DNA substrates, introducing single-strand cuts in duplex DNA close to junctions with ss-DNA.</text>
</comment>
<comment type="cofactor">
    <cofactor evidence="1">
        <name>a divalent metal cation</name>
        <dbReference type="ChEBI" id="CHEBI:60240"/>
    </cofactor>
</comment>
<comment type="subunit">
    <text evidence="1">Forms a heterodimer with SLX4.</text>
</comment>
<comment type="subcellular location">
    <subcellularLocation>
        <location evidence="1">Nucleus</location>
    </subcellularLocation>
</comment>
<comment type="similarity">
    <text evidence="1">Belongs to the SLX1 family.</text>
</comment>
<feature type="chain" id="PRO_0000383796" description="Structure-specific endonuclease subunit SLX1">
    <location>
        <begin position="1"/>
        <end position="336"/>
    </location>
</feature>
<feature type="domain" description="GIY-YIG" evidence="1">
    <location>
        <begin position="21"/>
        <end position="104"/>
    </location>
</feature>
<feature type="zinc finger region" description="SLX1-type" evidence="1">
    <location>
        <begin position="214"/>
        <end position="290"/>
    </location>
</feature>
<feature type="region of interest" description="Disordered" evidence="2">
    <location>
        <begin position="37"/>
        <end position="57"/>
    </location>
</feature>
<keyword id="KW-0227">DNA damage</keyword>
<keyword id="KW-0233">DNA recombination</keyword>
<keyword id="KW-0234">DNA repair</keyword>
<keyword id="KW-0255">Endonuclease</keyword>
<keyword id="KW-0378">Hydrolase</keyword>
<keyword id="KW-0479">Metal-binding</keyword>
<keyword id="KW-0540">Nuclease</keyword>
<keyword id="KW-0539">Nucleus</keyword>
<keyword id="KW-1185">Reference proteome</keyword>
<keyword id="KW-0862">Zinc</keyword>
<keyword id="KW-0863">Zinc-finger</keyword>
<evidence type="ECO:0000255" key="1">
    <source>
        <dbReference type="HAMAP-Rule" id="MF_03100"/>
    </source>
</evidence>
<evidence type="ECO:0000256" key="2">
    <source>
        <dbReference type="SAM" id="MobiDB-lite"/>
    </source>
</evidence>
<proteinExistence type="inferred from homology"/>
<sequence>MPRRPSTGTQSDTPALHVVPSFYGVYLLQSEPKPSSFYIGSTPDPPRRLRQHNGDLKAGGAYRTKRAGFRPWRMLLVVYDFPSKVSALQFEHSFQHCHETRHIKQEERISKNKLSGRTLHHKVANVALLLRSSYFRHLPLKVLVFEEAVYNSFMNNKFVTCSHVDLLNTNFNEYFSVMEKDLDSTVDSWKTRHTNENEIWSMAKEAVILGSPRCALCLEPIEQVPETSSPISKRSDLQRYLQSESLPLVTMCYNPQCRDVFHLSCLGHRFTNSDGFQSLIPATVNRCCSCNAKLEWRTLAKIATKLRYYVLKDSLQLPSQVLENDDNYESQNVNDS</sequence>
<organism>
    <name type="scientific">Scheffersomyces stipitis (strain ATCC 58785 / CBS 6054 / NBRC 10063 / NRRL Y-11545)</name>
    <name type="common">Yeast</name>
    <name type="synonym">Pichia stipitis</name>
    <dbReference type="NCBI Taxonomy" id="322104"/>
    <lineage>
        <taxon>Eukaryota</taxon>
        <taxon>Fungi</taxon>
        <taxon>Dikarya</taxon>
        <taxon>Ascomycota</taxon>
        <taxon>Saccharomycotina</taxon>
        <taxon>Pichiomycetes</taxon>
        <taxon>Debaryomycetaceae</taxon>
        <taxon>Scheffersomyces</taxon>
    </lineage>
</organism>
<accession>A3LZG5</accession>
<name>SLX1_PICST</name>
<protein>
    <recommendedName>
        <fullName evidence="1">Structure-specific endonuclease subunit SLX1</fullName>
        <ecNumber evidence="1">3.1.-.-</ecNumber>
    </recommendedName>
</protein>
<dbReference type="EC" id="3.1.-.-" evidence="1"/>
<dbReference type="EMBL" id="CP000501">
    <property type="protein sequence ID" value="ABN68333.2"/>
    <property type="molecule type" value="Genomic_DNA"/>
</dbReference>
<dbReference type="RefSeq" id="XP_001386362.2">
    <property type="nucleotide sequence ID" value="XM_001386325.1"/>
</dbReference>
<dbReference type="SMR" id="A3LZG5"/>
<dbReference type="FunCoup" id="A3LZG5">
    <property type="interactions" value="418"/>
</dbReference>
<dbReference type="STRING" id="322104.A3LZG5"/>
<dbReference type="GeneID" id="4840669"/>
<dbReference type="KEGG" id="pic:PICST_90954"/>
<dbReference type="eggNOG" id="KOG3005">
    <property type="taxonomic scope" value="Eukaryota"/>
</dbReference>
<dbReference type="HOGENOM" id="CLU_030739_1_1_1"/>
<dbReference type="InParanoid" id="A3LZG5"/>
<dbReference type="OMA" id="INPREER"/>
<dbReference type="OrthoDB" id="24645at2759"/>
<dbReference type="Proteomes" id="UP000002258">
    <property type="component" value="Chromosome 7"/>
</dbReference>
<dbReference type="GO" id="GO:0033557">
    <property type="term" value="C:Slx1-Slx4 complex"/>
    <property type="evidence" value="ECO:0007669"/>
    <property type="project" value="UniProtKB-UniRule"/>
</dbReference>
<dbReference type="GO" id="GO:0017108">
    <property type="term" value="F:5'-flap endonuclease activity"/>
    <property type="evidence" value="ECO:0007669"/>
    <property type="project" value="EnsemblFungi"/>
</dbReference>
<dbReference type="GO" id="GO:0008821">
    <property type="term" value="F:crossover junction DNA endonuclease activity"/>
    <property type="evidence" value="ECO:0007669"/>
    <property type="project" value="TreeGrafter"/>
</dbReference>
<dbReference type="GO" id="GO:0008270">
    <property type="term" value="F:zinc ion binding"/>
    <property type="evidence" value="ECO:0007669"/>
    <property type="project" value="UniProtKB-KW"/>
</dbReference>
<dbReference type="GO" id="GO:0006261">
    <property type="term" value="P:DNA-templated DNA replication"/>
    <property type="evidence" value="ECO:0007669"/>
    <property type="project" value="EnsemblFungi"/>
</dbReference>
<dbReference type="GO" id="GO:0000724">
    <property type="term" value="P:double-strand break repair via homologous recombination"/>
    <property type="evidence" value="ECO:0007669"/>
    <property type="project" value="TreeGrafter"/>
</dbReference>
<dbReference type="CDD" id="cd10455">
    <property type="entry name" value="GIY-YIG_SLX1"/>
    <property type="match status" value="1"/>
</dbReference>
<dbReference type="Gene3D" id="3.40.1440.10">
    <property type="entry name" value="GIY-YIG endonuclease"/>
    <property type="match status" value="1"/>
</dbReference>
<dbReference type="Gene3D" id="3.30.40.10">
    <property type="entry name" value="Zinc/RING finger domain, C3HC4 (zinc finger)"/>
    <property type="match status" value="1"/>
</dbReference>
<dbReference type="HAMAP" id="MF_03100">
    <property type="entry name" value="Endonuc_su_Slx1"/>
    <property type="match status" value="1"/>
</dbReference>
<dbReference type="InterPro" id="IPR000305">
    <property type="entry name" value="GIY-YIG_endonuc"/>
</dbReference>
<dbReference type="InterPro" id="IPR035901">
    <property type="entry name" value="GIY-YIG_endonuc_sf"/>
</dbReference>
<dbReference type="InterPro" id="IPR027520">
    <property type="entry name" value="Slx1"/>
</dbReference>
<dbReference type="InterPro" id="IPR048749">
    <property type="entry name" value="SLX1_C"/>
</dbReference>
<dbReference type="InterPro" id="IPR050381">
    <property type="entry name" value="SLX1_endonuclease"/>
</dbReference>
<dbReference type="InterPro" id="IPR013083">
    <property type="entry name" value="Znf_RING/FYVE/PHD"/>
</dbReference>
<dbReference type="PANTHER" id="PTHR20208">
    <property type="entry name" value="STRUCTURE-SPECIFIC ENDONUCLEASE SUBUNIT SLX1"/>
    <property type="match status" value="1"/>
</dbReference>
<dbReference type="PANTHER" id="PTHR20208:SF10">
    <property type="entry name" value="STRUCTURE-SPECIFIC ENDONUCLEASE SUBUNIT SLX1"/>
    <property type="match status" value="1"/>
</dbReference>
<dbReference type="Pfam" id="PF01541">
    <property type="entry name" value="GIY-YIG"/>
    <property type="match status" value="1"/>
</dbReference>
<dbReference type="Pfam" id="PF21202">
    <property type="entry name" value="SLX1_C"/>
    <property type="match status" value="1"/>
</dbReference>
<dbReference type="SUPFAM" id="SSF82771">
    <property type="entry name" value="GIY-YIG endonuclease"/>
    <property type="match status" value="1"/>
</dbReference>
<dbReference type="PROSITE" id="PS50164">
    <property type="entry name" value="GIY_YIG"/>
    <property type="match status" value="1"/>
</dbReference>
<reference key="1">
    <citation type="journal article" date="2007" name="Nat. Biotechnol.">
        <title>Genome sequence of the lignocellulose-bioconverting and xylose-fermenting yeast Pichia stipitis.</title>
        <authorList>
            <person name="Jeffries T.W."/>
            <person name="Grigoriev I.V."/>
            <person name="Grimwood J."/>
            <person name="Laplaza J.M."/>
            <person name="Aerts A."/>
            <person name="Salamov A."/>
            <person name="Schmutz J."/>
            <person name="Lindquist E."/>
            <person name="Dehal P."/>
            <person name="Shapiro H."/>
            <person name="Jin Y.-S."/>
            <person name="Passoth V."/>
            <person name="Richardson P.M."/>
        </authorList>
    </citation>
    <scope>NUCLEOTIDE SEQUENCE [LARGE SCALE GENOMIC DNA]</scope>
    <source>
        <strain>ATCC 58785 / CBS 6054 / NBRC 10063 / NRRL Y-11545</strain>
    </source>
</reference>
<gene>
    <name evidence="1" type="primary">SLX1</name>
    <name type="ORF">PICST_90954</name>
</gene>